<reference key="1">
    <citation type="journal article" date="2006" name="Theor. Appl. Genet.">
        <title>Cloning and comparative analysis of the gene encoding diacylglycerol acyltransferase from wild type and cultivated soybean.</title>
        <authorList>
            <person name="Wang H.W."/>
            <person name="Zhang J.S."/>
            <person name="Gai J.Y."/>
            <person name="Chen S.Y."/>
        </authorList>
    </citation>
    <scope>NUCLEOTIDE SEQUENCE [MRNA]</scope>
</reference>
<reference key="2">
    <citation type="journal article" date="2013" name="Funct. Integr. Genomics">
        <title>Soybean oil biosynthesis: role of diacylglycerol acyltransferases.</title>
        <authorList>
            <person name="Li R."/>
            <person name="Hatanaka T."/>
            <person name="Yu K."/>
            <person name="Wu Y."/>
            <person name="Fukushige H."/>
            <person name="Hildebrand D."/>
        </authorList>
    </citation>
    <scope>NUCLEOTIDE SEQUENCE [MRNA]</scope>
    <scope>FUNCTION</scope>
    <scope>CATALYTIC ACTIVITY</scope>
    <scope>TISSUE SPECIFICITY</scope>
    <scope>DEVELOPMENTAL STAGE</scope>
    <source>
        <strain>cv. Jack</strain>
    </source>
</reference>
<reference key="3">
    <citation type="journal article" date="2016" name="Sci. Rep.">
        <title>Two types of soybean diacylglycerol acyltransferases are differentially involved in triacylglycerol biosynthesis and response to environmental stresses and hormones.</title>
        <authorList>
            <person name="Chen B."/>
            <person name="Wang J."/>
            <person name="Zhang G."/>
            <person name="Liu J."/>
            <person name="Manan S."/>
            <person name="Hu H."/>
            <person name="Zhao J."/>
        </authorList>
    </citation>
    <scope>NUCLEOTIDE SEQUENCE [MRNA]</scope>
    <scope>FUNCTION</scope>
    <scope>SUBCELLULAR LOCATION</scope>
    <scope>TISSUE SPECIFICITY</scope>
    <scope>INDUCTION</scope>
    <source>
        <strain>cv. Williams 82</strain>
    </source>
</reference>
<reference key="4">
    <citation type="journal article" date="2010" name="Nature">
        <title>Genome sequence of the palaeopolyploid soybean.</title>
        <authorList>
            <person name="Schmutz J."/>
            <person name="Cannon S.B."/>
            <person name="Schlueter J."/>
            <person name="Ma J."/>
            <person name="Mitros T."/>
            <person name="Nelson W."/>
            <person name="Hyten D.L."/>
            <person name="Song Q."/>
            <person name="Thelen J.J."/>
            <person name="Cheng J."/>
            <person name="Xu D."/>
            <person name="Hellsten U."/>
            <person name="May G.D."/>
            <person name="Yu Y."/>
            <person name="Sakurai T."/>
            <person name="Umezawa T."/>
            <person name="Bhattacharyya M.K."/>
            <person name="Sandhu D."/>
            <person name="Valliyodan B."/>
            <person name="Lindquist E."/>
            <person name="Peto M."/>
            <person name="Grant D."/>
            <person name="Shu S."/>
            <person name="Goodstein D."/>
            <person name="Barry K."/>
            <person name="Futrell-Griggs M."/>
            <person name="Abernathy B."/>
            <person name="Du J."/>
            <person name="Tian Z."/>
            <person name="Zhu L."/>
            <person name="Gill N."/>
            <person name="Joshi T."/>
            <person name="Libault M."/>
            <person name="Sethuraman A."/>
            <person name="Zhang X.-C."/>
            <person name="Shinozaki K."/>
            <person name="Nguyen H.T."/>
            <person name="Wing R.A."/>
            <person name="Cregan P."/>
            <person name="Specht J."/>
            <person name="Grimwood J."/>
            <person name="Rokhsar D."/>
            <person name="Stacey G."/>
            <person name="Shoemaker R.C."/>
            <person name="Jackson S.A."/>
        </authorList>
    </citation>
    <scope>NUCLEOTIDE SEQUENCE [LARGE SCALE GENOMIC DNA]</scope>
    <source>
        <strain>cv. Williams 82</strain>
    </source>
</reference>
<organism>
    <name type="scientific">Glycine max</name>
    <name type="common">Soybean</name>
    <name type="synonym">Glycine hispida</name>
    <dbReference type="NCBI Taxonomy" id="3847"/>
    <lineage>
        <taxon>Eukaryota</taxon>
        <taxon>Viridiplantae</taxon>
        <taxon>Streptophyta</taxon>
        <taxon>Embryophyta</taxon>
        <taxon>Tracheophyta</taxon>
        <taxon>Spermatophyta</taxon>
        <taxon>Magnoliopsida</taxon>
        <taxon>eudicotyledons</taxon>
        <taxon>Gunneridae</taxon>
        <taxon>Pentapetalae</taxon>
        <taxon>rosids</taxon>
        <taxon>fabids</taxon>
        <taxon>Fabales</taxon>
        <taxon>Fabaceae</taxon>
        <taxon>Papilionoideae</taxon>
        <taxon>50 kb inversion clade</taxon>
        <taxon>NPAAA clade</taxon>
        <taxon>indigoferoid/millettioid clade</taxon>
        <taxon>Phaseoleae</taxon>
        <taxon>Glycine</taxon>
        <taxon>Glycine subgen. Soja</taxon>
    </lineage>
</organism>
<feature type="chain" id="PRO_0000438905" description="Diacylglycerol O-acyltransferase 1A">
    <location>
        <begin position="1"/>
        <end position="498"/>
    </location>
</feature>
<feature type="transmembrane region" description="Helical" evidence="2">
    <location>
        <begin position="102"/>
        <end position="122"/>
    </location>
</feature>
<feature type="transmembrane region" description="Helical" evidence="2">
    <location>
        <begin position="146"/>
        <end position="166"/>
    </location>
</feature>
<feature type="transmembrane region" description="Helical" evidence="2">
    <location>
        <begin position="178"/>
        <end position="198"/>
    </location>
</feature>
<feature type="transmembrane region" description="Helical" evidence="2">
    <location>
        <begin position="203"/>
        <end position="223"/>
    </location>
</feature>
<feature type="transmembrane region" description="Helical" evidence="2">
    <location>
        <begin position="253"/>
        <end position="273"/>
    </location>
</feature>
<feature type="transmembrane region" description="Helical" evidence="2">
    <location>
        <begin position="295"/>
        <end position="315"/>
    </location>
</feature>
<feature type="transmembrane region" description="Helical" evidence="2">
    <location>
        <begin position="342"/>
        <end position="362"/>
    </location>
</feature>
<feature type="transmembrane region" description="Helical" evidence="2">
    <location>
        <begin position="410"/>
        <end position="430"/>
    </location>
</feature>
<feature type="transmembrane region" description="Helical" evidence="2">
    <location>
        <begin position="432"/>
        <end position="452"/>
    </location>
</feature>
<feature type="transmembrane region" description="Helical" evidence="2">
    <location>
        <begin position="465"/>
        <end position="485"/>
    </location>
</feature>
<feature type="region of interest" description="Disordered" evidence="3">
    <location>
        <begin position="1"/>
        <end position="67"/>
    </location>
</feature>
<feature type="short sequence motif" description="FYXDWWN motif" evidence="1">
    <location>
        <begin position="369"/>
        <end position="375"/>
    </location>
</feature>
<feature type="active site" evidence="1">
    <location>
        <position position="424"/>
    </location>
</feature>
<feature type="sequence conflict" description="In Ref. 3; AMP18197." evidence="8" ref="3">
    <original>N</original>
    <variation>S</variation>
    <location>
        <position position="15"/>
    </location>
</feature>
<feature type="sequence conflict" description="In Ref. 3; AMP18197." evidence="8" ref="3">
    <original>V</original>
    <variation>A</variation>
    <location>
        <position position="342"/>
    </location>
</feature>
<feature type="sequence conflict" description="In Ref. 2; BAE93460." evidence="8" ref="2">
    <original>D</original>
    <variation>G</variation>
    <location>
        <position position="366"/>
    </location>
</feature>
<feature type="sequence conflict" description="In Ref. 2; BAE93460." evidence="8" ref="2">
    <original>Q</original>
    <variation>H</variation>
    <location>
        <position position="479"/>
    </location>
</feature>
<gene>
    <name evidence="7" type="primary">DGAT1A</name>
    <name evidence="6" type="synonym">DGAT</name>
    <name evidence="9" type="ordered locus">Glyma13g16560</name>
</gene>
<keyword id="KW-0012">Acyltransferase</keyword>
<keyword id="KW-0256">Endoplasmic reticulum</keyword>
<keyword id="KW-0319">Glycerol metabolism</keyword>
<keyword id="KW-0444">Lipid biosynthesis</keyword>
<keyword id="KW-0443">Lipid metabolism</keyword>
<keyword id="KW-0472">Membrane</keyword>
<keyword id="KW-1185">Reference proteome</keyword>
<keyword id="KW-0808">Transferase</keyword>
<keyword id="KW-0812">Transmembrane</keyword>
<keyword id="KW-1133">Transmembrane helix</keyword>
<sequence length="498" mass="57322">MAISDEPETVATALNHSSLRRRPTAAGLFNSPETTTDSSGDDLAKDSGSDDSISSDAANSQPQQKQDTDFSVLKFAYRPSVPAHRKVKESPLSSDTIFRQSHAGLFNLCIVVLVAVNSRLIIENLMKYGWLIKSGFWFSSKSLRDWPLFMCCLSLVVFPFAAFIVEKLAQQKCIPEPVVVVLHIIITSASLFYPVLVILRCDSAFLSGVTLMLFACVVWLKLVSYAHTNYDMRALTKSVEKGEALPDTLNMDYPYNVSFKSLAYFLVAPTLCYQPSYPRTPYIRKGWLFRQLVKLIIFTGVMGFIIEQYINPIVQNSQHPLKGNLLYAIERVLKLSVPNLYVWLCMFYCFFHLWLNILAELLRFGDREFYQDWWNAKTVEDYWRMWNMPVHKWMIRHLYFPCLRHGIPKAVALLIAFLVSALFHELCIAVPCHIFKLWAFGGIMFQVPLVFITNYLQNKFRNSMVGNMIFWFIFSILGQPMCVLLYYHDLMNRKGKLD</sequence>
<name>DAT1A_SOYBN</name>
<evidence type="ECO:0000250" key="1">
    <source>
        <dbReference type="UniProtKB" id="O75907"/>
    </source>
</evidence>
<evidence type="ECO:0000255" key="2"/>
<evidence type="ECO:0000256" key="3">
    <source>
        <dbReference type="SAM" id="MobiDB-lite"/>
    </source>
</evidence>
<evidence type="ECO:0000269" key="4">
    <source>
    </source>
</evidence>
<evidence type="ECO:0000269" key="5">
    <source>
    </source>
</evidence>
<evidence type="ECO:0000303" key="6">
    <source>
    </source>
</evidence>
<evidence type="ECO:0000303" key="7">
    <source>
    </source>
</evidence>
<evidence type="ECO:0000305" key="8"/>
<evidence type="ECO:0000312" key="9">
    <source>
        <dbReference type="EMBL" id="KRH19213.1"/>
    </source>
</evidence>
<protein>
    <recommendedName>
        <fullName evidence="8">Diacylglycerol O-acyltransferase 1A</fullName>
        <shortName evidence="7">GmDGAT1A</shortName>
        <ecNumber evidence="4">2.3.1.20</ecNumber>
    </recommendedName>
</protein>
<proteinExistence type="evidence at protein level"/>
<accession>Q5GKZ7</accession>
<accession>A0A1B0V7W1</accession>
<accession>Q1MW31</accession>
<comment type="function">
    <text evidence="4 5">Major contributor to triacylglycerol (TAG) synthesis and oil accumulation in developing seeds. Catalyzes the acylation of the sn-3 hydroxy group of sn-1,2-diacylglycerol using acyl-CoA (PubMed:23322364, PubMed:27345221). Has a marked preference for oleoyl-CoA (18:1) and sn-1,2-dioleoylglycerol over vernoloyl-CoA and sn-1,2-divernoloylglycerol (PubMed:23322364). Can use oleoyl-CoA, linoleoyl-CoA and linolenoyl-CoA as substrates (PubMed:27345221).</text>
</comment>
<comment type="catalytic activity">
    <reaction evidence="4">
        <text>an acyl-CoA + a 1,2-diacyl-sn-glycerol = a triacyl-sn-glycerol + CoA</text>
        <dbReference type="Rhea" id="RHEA:10868"/>
        <dbReference type="ChEBI" id="CHEBI:17815"/>
        <dbReference type="ChEBI" id="CHEBI:57287"/>
        <dbReference type="ChEBI" id="CHEBI:58342"/>
        <dbReference type="ChEBI" id="CHEBI:64615"/>
        <dbReference type="EC" id="2.3.1.20"/>
    </reaction>
</comment>
<comment type="pathway">
    <text evidence="8">Glycerolipid metabolism; triacylglycerol biosynthesis.</text>
</comment>
<comment type="subcellular location">
    <subcellularLocation>
        <location evidence="5">Endoplasmic reticulum membrane</location>
        <topology evidence="2">Multi-pass membrane protein</topology>
    </subcellularLocation>
</comment>
<comment type="tissue specificity">
    <text evidence="4 5">Highly expressed in flowers and pods. Expressed at low levels in roots, stems and leaves.</text>
</comment>
<comment type="developmental stage">
    <text evidence="4">During seed development, expressed from 15 to 55 days after flowering (DAF), with a peak at 35 DAF.</text>
</comment>
<comment type="induction">
    <text evidence="5">Induced by heat shock, insect biting and abscisic acid (ABA). Down-regulated by cold stress and treatment with jasmonate.</text>
</comment>
<comment type="similarity">
    <text evidence="8">Belongs to the membrane-bound acyltransferase family. Sterol o-acyltransferase subfamily.</text>
</comment>
<dbReference type="EC" id="2.3.1.20" evidence="4"/>
<dbReference type="EMBL" id="AY496439">
    <property type="protein sequence ID" value="AAS78662.1"/>
    <property type="molecule type" value="mRNA"/>
</dbReference>
<dbReference type="EMBL" id="AB257589">
    <property type="protein sequence ID" value="BAE93460.1"/>
    <property type="molecule type" value="mRNA"/>
</dbReference>
<dbReference type="EMBL" id="KT878751">
    <property type="protein sequence ID" value="AMP18197.1"/>
    <property type="molecule type" value="mRNA"/>
</dbReference>
<dbReference type="EMBL" id="CM000846">
    <property type="protein sequence ID" value="KRH19213.1"/>
    <property type="molecule type" value="Genomic_DNA"/>
</dbReference>
<dbReference type="RefSeq" id="NP_001237289.1">
    <property type="nucleotide sequence ID" value="NM_001250360.2"/>
</dbReference>
<dbReference type="SMR" id="Q5GKZ7"/>
<dbReference type="FunCoup" id="Q5GKZ7">
    <property type="interactions" value="2714"/>
</dbReference>
<dbReference type="STRING" id="3847.Q5GKZ7"/>
<dbReference type="PaxDb" id="3847-GLYMA13G16560.2"/>
<dbReference type="EnsemblPlants" id="KRH19213">
    <property type="protein sequence ID" value="KRH19213"/>
    <property type="gene ID" value="GLYMA_13G106100"/>
</dbReference>
<dbReference type="GeneID" id="548005"/>
<dbReference type="Gramene" id="KRH19213">
    <property type="protein sequence ID" value="KRH19213"/>
    <property type="gene ID" value="GLYMA_13G106100"/>
</dbReference>
<dbReference type="KEGG" id="gmx:548005"/>
<dbReference type="eggNOG" id="KOG0380">
    <property type="taxonomic scope" value="Eukaryota"/>
</dbReference>
<dbReference type="InParanoid" id="Q5GKZ7"/>
<dbReference type="OMA" id="RCHDYRR"/>
<dbReference type="OrthoDB" id="10039049at2759"/>
<dbReference type="BRENDA" id="2.3.1.20">
    <property type="organism ID" value="2483"/>
</dbReference>
<dbReference type="UniPathway" id="UPA00282"/>
<dbReference type="Proteomes" id="UP000008827">
    <property type="component" value="Chromosome 13"/>
</dbReference>
<dbReference type="GO" id="GO:0009941">
    <property type="term" value="C:chloroplast envelope"/>
    <property type="evidence" value="ECO:0000318"/>
    <property type="project" value="GO_Central"/>
</dbReference>
<dbReference type="GO" id="GO:0005789">
    <property type="term" value="C:endoplasmic reticulum membrane"/>
    <property type="evidence" value="ECO:0000314"/>
    <property type="project" value="UniProtKB"/>
</dbReference>
<dbReference type="GO" id="GO:0004144">
    <property type="term" value="F:diacylglycerol O-acyltransferase activity"/>
    <property type="evidence" value="ECO:0000314"/>
    <property type="project" value="UniProtKB"/>
</dbReference>
<dbReference type="GO" id="GO:0006071">
    <property type="term" value="P:glycerol metabolic process"/>
    <property type="evidence" value="ECO:0007669"/>
    <property type="project" value="UniProtKB-KW"/>
</dbReference>
<dbReference type="GO" id="GO:0019432">
    <property type="term" value="P:triglyceride biosynthetic process"/>
    <property type="evidence" value="ECO:0000314"/>
    <property type="project" value="UniProtKB"/>
</dbReference>
<dbReference type="InterPro" id="IPR027251">
    <property type="entry name" value="Diacylglycerol_acylTrfase1"/>
</dbReference>
<dbReference type="InterPro" id="IPR004299">
    <property type="entry name" value="MBOAT_fam"/>
</dbReference>
<dbReference type="InterPro" id="IPR014371">
    <property type="entry name" value="Oat_ACAT_DAG_ARE"/>
</dbReference>
<dbReference type="PANTHER" id="PTHR10408:SF22">
    <property type="entry name" value="DIACYLGLYCEROL O-ACYLTRANSFERASE 1A"/>
    <property type="match status" value="1"/>
</dbReference>
<dbReference type="PANTHER" id="PTHR10408">
    <property type="entry name" value="STEROL O-ACYLTRANSFERASE"/>
    <property type="match status" value="1"/>
</dbReference>
<dbReference type="Pfam" id="PF03062">
    <property type="entry name" value="MBOAT"/>
    <property type="match status" value="1"/>
</dbReference>
<dbReference type="PIRSF" id="PIRSF000439">
    <property type="entry name" value="Oat_ACAT_DAG_ARE"/>
    <property type="match status" value="1"/>
</dbReference>
<dbReference type="PIRSF" id="PIRSF500231">
    <property type="entry name" value="Oat_dag"/>
    <property type="match status" value="1"/>
</dbReference>